<proteinExistence type="inferred from homology"/>
<comment type="function">
    <text evidence="2">Catalyzes the dehydration of D-galactonate to 2-keto-3-deoxy-D-galactonate.</text>
</comment>
<comment type="catalytic activity">
    <reaction evidence="2">
        <text>D-galactonate = 2-dehydro-3-deoxy-D-galactonate + H2O</text>
        <dbReference type="Rhea" id="RHEA:18649"/>
        <dbReference type="ChEBI" id="CHEBI:12931"/>
        <dbReference type="ChEBI" id="CHEBI:15377"/>
        <dbReference type="ChEBI" id="CHEBI:57989"/>
        <dbReference type="EC" id="4.2.1.6"/>
    </reaction>
</comment>
<comment type="cofactor">
    <cofactor evidence="2">
        <name>Mg(2+)</name>
        <dbReference type="ChEBI" id="CHEBI:18420"/>
    </cofactor>
    <text evidence="2">Binds 1 Mg(2+) ion per subunit.</text>
</comment>
<comment type="pathway">
    <text evidence="2">Carbohydrate acid metabolism; D-galactonate degradation; D-glyceraldehyde 3-phosphate and pyruvate from D-galactonate: step 1/3.</text>
</comment>
<comment type="miscellaneous">
    <text evidence="2">Reaction proceeds via an anti dehydration.</text>
</comment>
<comment type="similarity">
    <text evidence="2">Belongs to the mandelate racemase/muconate lactonizing enzyme family. GalD subfamily.</text>
</comment>
<sequence>MKITHITTYRLPPRWMFLKIETDEGVVGWGEPVIEGRARTVEAAVHEFADYLIGKDPARINDLWQVMYRAGFYRGGPIMMSAIAGIDQALWDIKGKVLNAPVWQLMGGLVRDKIKAYSWVGGDRPADVIDGIEKLRGIGFDTFKLNGCEEMGVIDNSRAVDAAVNTVAQIREAFGSEIEFGLDFHGRVSAPMAKVLIKELEPYRPLFIEEPVLAEQEEYYPRLAAQTHIPIAAGERMFSRFEFKRVLDAGGLAILQPDLSHAGGITECYKIAGMAEAYDVALAPHCPLGPIALAACLHIDFVSRNAVFQEQSMGIHYNKGAELLDFVKNKEDFSMDGGFFKPLTKPGLGVDIDEARVIELSKSAPDWRNPLWRHADGSVAEW</sequence>
<evidence type="ECO:0000250" key="1"/>
<evidence type="ECO:0000255" key="2">
    <source>
        <dbReference type="HAMAP-Rule" id="MF_01289"/>
    </source>
</evidence>
<reference key="1">
    <citation type="journal article" date="2008" name="Genome Res.">
        <title>Comparative genome analysis of Salmonella enteritidis PT4 and Salmonella gallinarum 287/91 provides insights into evolutionary and host adaptation pathways.</title>
        <authorList>
            <person name="Thomson N.R."/>
            <person name="Clayton D.J."/>
            <person name="Windhorst D."/>
            <person name="Vernikos G."/>
            <person name="Davidson S."/>
            <person name="Churcher C."/>
            <person name="Quail M.A."/>
            <person name="Stevens M."/>
            <person name="Jones M.A."/>
            <person name="Watson M."/>
            <person name="Barron A."/>
            <person name="Layton A."/>
            <person name="Pickard D."/>
            <person name="Kingsley R.A."/>
            <person name="Bignell A."/>
            <person name="Clark L."/>
            <person name="Harris B."/>
            <person name="Ormond D."/>
            <person name="Abdellah Z."/>
            <person name="Brooks K."/>
            <person name="Cherevach I."/>
            <person name="Chillingworth T."/>
            <person name="Woodward J."/>
            <person name="Norberczak H."/>
            <person name="Lord A."/>
            <person name="Arrowsmith C."/>
            <person name="Jagels K."/>
            <person name="Moule S."/>
            <person name="Mungall K."/>
            <person name="Saunders M."/>
            <person name="Whitehead S."/>
            <person name="Chabalgoity J.A."/>
            <person name="Maskell D."/>
            <person name="Humphreys T."/>
            <person name="Roberts M."/>
            <person name="Barrow P.A."/>
            <person name="Dougan G."/>
            <person name="Parkhill J."/>
        </authorList>
    </citation>
    <scope>NUCLEOTIDE SEQUENCE [LARGE SCALE GENOMIC DNA]</scope>
    <source>
        <strain>287/91 / NCTC 13346</strain>
    </source>
</reference>
<gene>
    <name evidence="2" type="primary">dgoD</name>
    <name type="ordered locus">SG3604</name>
</gene>
<keyword id="KW-0456">Lyase</keyword>
<keyword id="KW-0460">Magnesium</keyword>
<keyword id="KW-0479">Metal-binding</keyword>
<organism>
    <name type="scientific">Salmonella gallinarum (strain 287/91 / NCTC 13346)</name>
    <dbReference type="NCBI Taxonomy" id="550538"/>
    <lineage>
        <taxon>Bacteria</taxon>
        <taxon>Pseudomonadati</taxon>
        <taxon>Pseudomonadota</taxon>
        <taxon>Gammaproteobacteria</taxon>
        <taxon>Enterobacterales</taxon>
        <taxon>Enterobacteriaceae</taxon>
        <taxon>Salmonella</taxon>
    </lineage>
</organism>
<dbReference type="EC" id="4.2.1.6" evidence="2"/>
<dbReference type="EMBL" id="AM933173">
    <property type="protein sequence ID" value="CAR39392.1"/>
    <property type="molecule type" value="Genomic_DNA"/>
</dbReference>
<dbReference type="RefSeq" id="WP_000704738.1">
    <property type="nucleotide sequence ID" value="NC_011274.1"/>
</dbReference>
<dbReference type="SMR" id="B5RFZ8"/>
<dbReference type="KEGG" id="seg:SG3604"/>
<dbReference type="HOGENOM" id="CLU_030273_3_2_6"/>
<dbReference type="UniPathway" id="UPA00081">
    <property type="reaction ID" value="UER00518"/>
</dbReference>
<dbReference type="Proteomes" id="UP000008321">
    <property type="component" value="Chromosome"/>
</dbReference>
<dbReference type="GO" id="GO:0008869">
    <property type="term" value="F:galactonate dehydratase activity"/>
    <property type="evidence" value="ECO:0007669"/>
    <property type="project" value="UniProtKB-UniRule"/>
</dbReference>
<dbReference type="GO" id="GO:0000287">
    <property type="term" value="F:magnesium ion binding"/>
    <property type="evidence" value="ECO:0007669"/>
    <property type="project" value="UniProtKB-UniRule"/>
</dbReference>
<dbReference type="GO" id="GO:0009063">
    <property type="term" value="P:amino acid catabolic process"/>
    <property type="evidence" value="ECO:0007669"/>
    <property type="project" value="InterPro"/>
</dbReference>
<dbReference type="GO" id="GO:0034194">
    <property type="term" value="P:D-galactonate catabolic process"/>
    <property type="evidence" value="ECO:0007669"/>
    <property type="project" value="UniProtKB-UniRule"/>
</dbReference>
<dbReference type="CDD" id="cd03325">
    <property type="entry name" value="D-galactonate_dehydratase"/>
    <property type="match status" value="1"/>
</dbReference>
<dbReference type="FunFam" id="3.30.390.10:FF:000003">
    <property type="entry name" value="D-galactonate dehydratase"/>
    <property type="match status" value="1"/>
</dbReference>
<dbReference type="Gene3D" id="3.20.20.120">
    <property type="entry name" value="Enolase-like C-terminal domain"/>
    <property type="match status" value="1"/>
</dbReference>
<dbReference type="Gene3D" id="3.30.390.10">
    <property type="entry name" value="Enolase-like, N-terminal domain"/>
    <property type="match status" value="1"/>
</dbReference>
<dbReference type="HAMAP" id="MF_01289">
    <property type="entry name" value="Galacton_dehydrat"/>
    <property type="match status" value="1"/>
</dbReference>
<dbReference type="InterPro" id="IPR034593">
    <property type="entry name" value="DgoD-like"/>
</dbReference>
<dbReference type="InterPro" id="IPR036849">
    <property type="entry name" value="Enolase-like_C_sf"/>
</dbReference>
<dbReference type="InterPro" id="IPR029017">
    <property type="entry name" value="Enolase-like_N"/>
</dbReference>
<dbReference type="InterPro" id="IPR029065">
    <property type="entry name" value="Enolase_C-like"/>
</dbReference>
<dbReference type="InterPro" id="IPR023592">
    <property type="entry name" value="Galactonate_deHydtase"/>
</dbReference>
<dbReference type="InterPro" id="IPR018110">
    <property type="entry name" value="Mandel_Rmase/mucon_lact_enz_CS"/>
</dbReference>
<dbReference type="InterPro" id="IPR013342">
    <property type="entry name" value="Mandelate_racemase_C"/>
</dbReference>
<dbReference type="InterPro" id="IPR013341">
    <property type="entry name" value="Mandelate_racemase_N_dom"/>
</dbReference>
<dbReference type="NCBIfam" id="NF010624">
    <property type="entry name" value="PRK14017.1"/>
    <property type="match status" value="1"/>
</dbReference>
<dbReference type="PANTHER" id="PTHR48080:SF2">
    <property type="entry name" value="D-GALACTONATE DEHYDRATASE"/>
    <property type="match status" value="1"/>
</dbReference>
<dbReference type="PANTHER" id="PTHR48080">
    <property type="entry name" value="D-GALACTONATE DEHYDRATASE-RELATED"/>
    <property type="match status" value="1"/>
</dbReference>
<dbReference type="Pfam" id="PF13378">
    <property type="entry name" value="MR_MLE_C"/>
    <property type="match status" value="1"/>
</dbReference>
<dbReference type="Pfam" id="PF02746">
    <property type="entry name" value="MR_MLE_N"/>
    <property type="match status" value="1"/>
</dbReference>
<dbReference type="SFLD" id="SFLDF00003">
    <property type="entry name" value="D-galactonate_dehydratase"/>
    <property type="match status" value="1"/>
</dbReference>
<dbReference type="SFLD" id="SFLDG00179">
    <property type="entry name" value="mandelate_racemase"/>
    <property type="match status" value="1"/>
</dbReference>
<dbReference type="SMART" id="SM00922">
    <property type="entry name" value="MR_MLE"/>
    <property type="match status" value="1"/>
</dbReference>
<dbReference type="SUPFAM" id="SSF51604">
    <property type="entry name" value="Enolase C-terminal domain-like"/>
    <property type="match status" value="1"/>
</dbReference>
<dbReference type="SUPFAM" id="SSF54826">
    <property type="entry name" value="Enolase N-terminal domain-like"/>
    <property type="match status" value="1"/>
</dbReference>
<dbReference type="PROSITE" id="PS00908">
    <property type="entry name" value="MR_MLE_1"/>
    <property type="match status" value="1"/>
</dbReference>
<dbReference type="PROSITE" id="PS00909">
    <property type="entry name" value="MR_MLE_2"/>
    <property type="match status" value="1"/>
</dbReference>
<name>DGOD_SALG2</name>
<feature type="chain" id="PRO_1000140388" description="D-galactonate dehydratase">
    <location>
        <begin position="1"/>
        <end position="382"/>
    </location>
</feature>
<feature type="active site" description="Proton donor" evidence="1">
    <location>
        <position position="185"/>
    </location>
</feature>
<feature type="active site" description="Proton acceptor" evidence="1">
    <location>
        <position position="285"/>
    </location>
</feature>
<feature type="binding site" evidence="2">
    <location>
        <position position="183"/>
    </location>
    <ligand>
        <name>Mg(2+)</name>
        <dbReference type="ChEBI" id="CHEBI:18420"/>
    </ligand>
</feature>
<feature type="binding site" evidence="2">
    <location>
        <position position="209"/>
    </location>
    <ligand>
        <name>Mg(2+)</name>
        <dbReference type="ChEBI" id="CHEBI:18420"/>
    </ligand>
</feature>
<feature type="binding site" evidence="2">
    <location>
        <position position="235"/>
    </location>
    <ligand>
        <name>Mg(2+)</name>
        <dbReference type="ChEBI" id="CHEBI:18420"/>
    </ligand>
</feature>
<feature type="site" description="Increases basicity of active site His" evidence="2">
    <location>
        <position position="258"/>
    </location>
</feature>
<feature type="site" description="Transition state stabilizer" evidence="2">
    <location>
        <position position="310"/>
    </location>
</feature>
<accession>B5RFZ8</accession>
<protein>
    <recommendedName>
        <fullName evidence="2">D-galactonate dehydratase</fullName>
        <shortName evidence="2">GalD</shortName>
        <ecNumber evidence="2">4.2.1.6</ecNumber>
    </recommendedName>
</protein>